<dbReference type="EMBL" id="BC098323">
    <property type="protein sequence ID" value="AAH98323.1"/>
    <property type="molecule type" value="mRNA"/>
</dbReference>
<dbReference type="EMBL" id="BC121203">
    <property type="protein sequence ID" value="AAI21204.1"/>
    <property type="molecule type" value="mRNA"/>
</dbReference>
<dbReference type="RefSeq" id="NP_001072175.1">
    <property type="nucleotide sequence ID" value="NM_001078707.1"/>
</dbReference>
<dbReference type="RefSeq" id="XP_012816683.1">
    <property type="nucleotide sequence ID" value="XM_012961229.3"/>
</dbReference>
<dbReference type="SMR" id="Q0IJ35"/>
<dbReference type="FunCoup" id="Q0IJ35">
    <property type="interactions" value="1866"/>
</dbReference>
<dbReference type="STRING" id="8364.ENSXETP00000014961"/>
<dbReference type="PaxDb" id="8364-ENSXETP00000050012"/>
<dbReference type="DNASU" id="613069"/>
<dbReference type="GeneID" id="613069"/>
<dbReference type="KEGG" id="xtr:613069"/>
<dbReference type="AGR" id="Xenbase:XB-GENE-5852953"/>
<dbReference type="CTD" id="83786"/>
<dbReference type="Xenbase" id="XB-GENE-5852953">
    <property type="gene designation" value="frmd8"/>
</dbReference>
<dbReference type="eggNOG" id="KOG4335">
    <property type="taxonomic scope" value="Eukaryota"/>
</dbReference>
<dbReference type="HOGENOM" id="CLU_032351_0_0_1"/>
<dbReference type="InParanoid" id="Q0IJ35"/>
<dbReference type="OMA" id="GCAFFYG"/>
<dbReference type="OrthoDB" id="2142533at2759"/>
<dbReference type="PhylomeDB" id="Q0IJ35"/>
<dbReference type="Proteomes" id="UP000008143">
    <property type="component" value="Chromosome 4"/>
</dbReference>
<dbReference type="GO" id="GO:0005856">
    <property type="term" value="C:cytoskeleton"/>
    <property type="evidence" value="ECO:0007669"/>
    <property type="project" value="InterPro"/>
</dbReference>
<dbReference type="GO" id="GO:0005829">
    <property type="term" value="C:cytosol"/>
    <property type="evidence" value="ECO:0000250"/>
    <property type="project" value="UniProtKB"/>
</dbReference>
<dbReference type="GO" id="GO:0005886">
    <property type="term" value="C:plasma membrane"/>
    <property type="evidence" value="ECO:0000250"/>
    <property type="project" value="UniProtKB"/>
</dbReference>
<dbReference type="GO" id="GO:0032760">
    <property type="term" value="P:positive regulation of tumor necrosis factor production"/>
    <property type="evidence" value="ECO:0000250"/>
    <property type="project" value="UniProtKB"/>
</dbReference>
<dbReference type="CDD" id="cd14473">
    <property type="entry name" value="FERM_B-lobe"/>
    <property type="match status" value="1"/>
</dbReference>
<dbReference type="FunFam" id="1.20.80.10:FF:000023">
    <property type="entry name" value="FERM domain containing 8"/>
    <property type="match status" value="1"/>
</dbReference>
<dbReference type="FunFam" id="2.30.29.30:FF:000216">
    <property type="entry name" value="FERM domain-containing protein 8"/>
    <property type="match status" value="1"/>
</dbReference>
<dbReference type="FunFam" id="3.10.20.90:FF:000191">
    <property type="entry name" value="FERM domain-containing protein 8"/>
    <property type="match status" value="1"/>
</dbReference>
<dbReference type="Gene3D" id="1.20.80.10">
    <property type="match status" value="1"/>
</dbReference>
<dbReference type="Gene3D" id="3.10.20.90">
    <property type="entry name" value="Phosphatidylinositol 3-kinase Catalytic Subunit, Chain A, domain 1"/>
    <property type="match status" value="1"/>
</dbReference>
<dbReference type="Gene3D" id="2.30.29.30">
    <property type="entry name" value="Pleckstrin-homology domain (PH domain)/Phosphotyrosine-binding domain (PTB)"/>
    <property type="match status" value="1"/>
</dbReference>
<dbReference type="InterPro" id="IPR019749">
    <property type="entry name" value="Band_41_domain"/>
</dbReference>
<dbReference type="InterPro" id="IPR014352">
    <property type="entry name" value="FERM/acyl-CoA-bd_prot_sf"/>
</dbReference>
<dbReference type="InterPro" id="IPR035963">
    <property type="entry name" value="FERM_2"/>
</dbReference>
<dbReference type="InterPro" id="IPR019748">
    <property type="entry name" value="FERM_central"/>
</dbReference>
<dbReference type="InterPro" id="IPR000299">
    <property type="entry name" value="FERM_domain"/>
</dbReference>
<dbReference type="InterPro" id="IPR051594">
    <property type="entry name" value="KRIT1/FRMD8"/>
</dbReference>
<dbReference type="InterPro" id="IPR011993">
    <property type="entry name" value="PH-like_dom_sf"/>
</dbReference>
<dbReference type="PANTHER" id="PTHR13283:SF10">
    <property type="entry name" value="FERM DOMAIN-CONTAINING PROTEIN 8"/>
    <property type="match status" value="1"/>
</dbReference>
<dbReference type="PANTHER" id="PTHR13283">
    <property type="entry name" value="KREV INTERACTION TRAPPED 1-RELATED"/>
    <property type="match status" value="1"/>
</dbReference>
<dbReference type="Pfam" id="PF00373">
    <property type="entry name" value="FERM_M"/>
    <property type="match status" value="1"/>
</dbReference>
<dbReference type="Pfam" id="PF24522">
    <property type="entry name" value="KRIT1_FRMD8_FERM_C"/>
    <property type="match status" value="1"/>
</dbReference>
<dbReference type="SMART" id="SM00295">
    <property type="entry name" value="B41"/>
    <property type="match status" value="1"/>
</dbReference>
<dbReference type="SUPFAM" id="SSF47031">
    <property type="entry name" value="Second domain of FERM"/>
    <property type="match status" value="1"/>
</dbReference>
<dbReference type="PROSITE" id="PS50057">
    <property type="entry name" value="FERM_3"/>
    <property type="match status" value="1"/>
</dbReference>
<sequence>MDGSETSHSSGLNDFLLRSSVSSGSRSMDVIVYLINDEIIQLTVDGLSVITAHELHKSIREALQLPETAQDVFALWLISPFLEVQLKPKHQPYKVCRQWHDLLARFTNCSSNDILQDEPFLQFRRNIFFPKARELQIAHERTLYLLYEEAKYNVLDGRYPCDVEDCELLGGLACRLELGPYNQNEHTPATIRPKLDSLFPPYLCKKRNGFFTTFKNKGGRQASFEQTVLNTYKEVKESSACTEEQAMKNHYREYLKKCHELPYYGCAFFHGVVDKPAQGFLNRSGRKPVSVAINLEGVSVIDRKEKHILISLTYPELSWDHTYPDEEEHILWLEFDGDAEGTPVNKLLKIYSKQAELMSGLIEYCIELSQTTESPASDFLPGNSQLSEKRSKLRRQESVLCNRMKHLNTIDYVEDGASIKRVKPKRTASFFTRQNTHYSAVQPSETPTET</sequence>
<gene>
    <name type="primary">frmd8</name>
</gene>
<name>FRMD8_XENTR</name>
<accession>Q0IJ35</accession>
<accession>Q4KMW0</accession>
<comment type="function">
    <text evidence="1">Promotes the cell surface stability of RHBDF1 and RHBDF2 and prevents their degradation via the endolysosomal pathway. By acting on RHBDF proteins, involved in ADAM17-mediated ligand shedding (By similarity). May negatively regulate Wnt signaling (By similarity).</text>
</comment>
<comment type="subcellular location">
    <subcellularLocation>
        <location evidence="1">Cytoplasm</location>
        <location evidence="1">Cytosol</location>
    </subcellularLocation>
    <subcellularLocation>
        <location evidence="1">Cell membrane</location>
    </subcellularLocation>
</comment>
<protein>
    <recommendedName>
        <fullName>FERM domain-containing protein 8</fullName>
    </recommendedName>
</protein>
<keyword id="KW-1003">Cell membrane</keyword>
<keyword id="KW-0963">Cytoplasm</keyword>
<keyword id="KW-0472">Membrane</keyword>
<keyword id="KW-1185">Reference proteome</keyword>
<evidence type="ECO:0000250" key="1">
    <source>
        <dbReference type="UniProtKB" id="Q9BZ67"/>
    </source>
</evidence>
<evidence type="ECO:0000255" key="2">
    <source>
        <dbReference type="PROSITE-ProRule" id="PRU00084"/>
    </source>
</evidence>
<feature type="chain" id="PRO_0000295782" description="FERM domain-containing protein 8">
    <location>
        <begin position="1"/>
        <end position="450"/>
    </location>
</feature>
<feature type="domain" description="FERM" evidence="2">
    <location>
        <begin position="28"/>
        <end position="373"/>
    </location>
</feature>
<reference key="1">
    <citation type="submission" date="2006-08" db="EMBL/GenBank/DDBJ databases">
        <authorList>
            <consortium name="NIH - Xenopus Gene Collection (XGC) project"/>
        </authorList>
    </citation>
    <scope>NUCLEOTIDE SEQUENCE [LARGE SCALE MRNA]</scope>
    <source>
        <tissue>Testis</tissue>
    </source>
</reference>
<organism>
    <name type="scientific">Xenopus tropicalis</name>
    <name type="common">Western clawed frog</name>
    <name type="synonym">Silurana tropicalis</name>
    <dbReference type="NCBI Taxonomy" id="8364"/>
    <lineage>
        <taxon>Eukaryota</taxon>
        <taxon>Metazoa</taxon>
        <taxon>Chordata</taxon>
        <taxon>Craniata</taxon>
        <taxon>Vertebrata</taxon>
        <taxon>Euteleostomi</taxon>
        <taxon>Amphibia</taxon>
        <taxon>Batrachia</taxon>
        <taxon>Anura</taxon>
        <taxon>Pipoidea</taxon>
        <taxon>Pipidae</taxon>
        <taxon>Xenopodinae</taxon>
        <taxon>Xenopus</taxon>
        <taxon>Silurana</taxon>
    </lineage>
</organism>
<proteinExistence type="evidence at transcript level"/>